<keyword id="KW-0007">Acetylation</keyword>
<keyword id="KW-0041">Annexin</keyword>
<keyword id="KW-0106">Calcium</keyword>
<keyword id="KW-0111">Calcium/phospholipid-binding</keyword>
<keyword id="KW-0593">Phospholipase A2 inhibitor</keyword>
<keyword id="KW-0597">Phosphoprotein</keyword>
<keyword id="KW-1185">Reference proteome</keyword>
<keyword id="KW-0677">Repeat</keyword>
<organism>
    <name type="scientific">Bos taurus</name>
    <name type="common">Bovine</name>
    <dbReference type="NCBI Taxonomy" id="9913"/>
    <lineage>
        <taxon>Eukaryota</taxon>
        <taxon>Metazoa</taxon>
        <taxon>Chordata</taxon>
        <taxon>Craniata</taxon>
        <taxon>Vertebrata</taxon>
        <taxon>Euteleostomi</taxon>
        <taxon>Mammalia</taxon>
        <taxon>Eutheria</taxon>
        <taxon>Laurasiatheria</taxon>
        <taxon>Artiodactyla</taxon>
        <taxon>Ruminantia</taxon>
        <taxon>Pecora</taxon>
        <taxon>Bovidae</taxon>
        <taxon>Bovinae</taxon>
        <taxon>Bos</taxon>
    </lineage>
</organism>
<name>ANXA3_BOVIN</name>
<evidence type="ECO:0000250" key="1"/>
<evidence type="ECO:0000250" key="2">
    <source>
        <dbReference type="UniProtKB" id="O35639"/>
    </source>
</evidence>
<evidence type="ECO:0000250" key="3">
    <source>
        <dbReference type="UniProtKB" id="P12429"/>
    </source>
</evidence>
<evidence type="ECO:0000250" key="4">
    <source>
        <dbReference type="UniProtKB" id="P14669"/>
    </source>
</evidence>
<evidence type="ECO:0000255" key="5">
    <source>
        <dbReference type="PROSITE-ProRule" id="PRU01245"/>
    </source>
</evidence>
<evidence type="ECO:0000305" key="6"/>
<comment type="function">
    <text evidence="1">Inhibitor of phospholipase A2, also possesses anti-coagulant properties. Also cleaves the cyclic bond of inositol 1,2-cyclic phosphate to form inositol 1-phosphate (By similarity).</text>
</comment>
<comment type="domain">
    <text>A pair of annexin repeats may form one binding site for calcium and phospholipid.</text>
</comment>
<comment type="similarity">
    <text evidence="5 6">Belongs to the annexin family.</text>
</comment>
<reference key="1">
    <citation type="submission" date="2005-09" db="EMBL/GenBank/DDBJ databases">
        <authorList>
            <consortium name="NIH - Mammalian Gene Collection (MGC) project"/>
        </authorList>
    </citation>
    <scope>NUCLEOTIDE SEQUENCE [LARGE SCALE MRNA]</scope>
    <source>
        <strain>Hereford</strain>
        <tissue>Ascending colon</tissue>
    </source>
</reference>
<dbReference type="EMBL" id="BC104614">
    <property type="protein sequence ID" value="AAI04615.1"/>
    <property type="molecule type" value="mRNA"/>
</dbReference>
<dbReference type="RefSeq" id="NP_001030402.1">
    <property type="nucleotide sequence ID" value="NM_001035325.1"/>
</dbReference>
<dbReference type="SMR" id="Q3SWX7"/>
<dbReference type="FunCoup" id="Q3SWX7">
    <property type="interactions" value="730"/>
</dbReference>
<dbReference type="STRING" id="9913.ENSBTAP00000069186"/>
<dbReference type="PaxDb" id="9913-ENSBTAP00000042843"/>
<dbReference type="PeptideAtlas" id="Q3SWX7"/>
<dbReference type="GeneID" id="518050"/>
<dbReference type="KEGG" id="bta:518050"/>
<dbReference type="CTD" id="306"/>
<dbReference type="eggNOG" id="KOG0819">
    <property type="taxonomic scope" value="Eukaryota"/>
</dbReference>
<dbReference type="InParanoid" id="Q3SWX7"/>
<dbReference type="OrthoDB" id="37886at2759"/>
<dbReference type="Proteomes" id="UP000009136">
    <property type="component" value="Unplaced"/>
</dbReference>
<dbReference type="GO" id="GO:0005737">
    <property type="term" value="C:cytoplasm"/>
    <property type="evidence" value="ECO:0000318"/>
    <property type="project" value="GO_Central"/>
</dbReference>
<dbReference type="GO" id="GO:0005634">
    <property type="term" value="C:nucleus"/>
    <property type="evidence" value="ECO:0000318"/>
    <property type="project" value="GO_Central"/>
</dbReference>
<dbReference type="GO" id="GO:0005886">
    <property type="term" value="C:plasma membrane"/>
    <property type="evidence" value="ECO:0000318"/>
    <property type="project" value="GO_Central"/>
</dbReference>
<dbReference type="GO" id="GO:0012506">
    <property type="term" value="C:vesicle membrane"/>
    <property type="evidence" value="ECO:0000318"/>
    <property type="project" value="GO_Central"/>
</dbReference>
<dbReference type="GO" id="GO:0005509">
    <property type="term" value="F:calcium ion binding"/>
    <property type="evidence" value="ECO:0007669"/>
    <property type="project" value="InterPro"/>
</dbReference>
<dbReference type="GO" id="GO:0005544">
    <property type="term" value="F:calcium-dependent phospholipid binding"/>
    <property type="evidence" value="ECO:0000318"/>
    <property type="project" value="GO_Central"/>
</dbReference>
<dbReference type="GO" id="GO:0001786">
    <property type="term" value="F:phosphatidylserine binding"/>
    <property type="evidence" value="ECO:0000318"/>
    <property type="project" value="GO_Central"/>
</dbReference>
<dbReference type="GO" id="GO:0019834">
    <property type="term" value="F:phospholipase A2 inhibitor activity"/>
    <property type="evidence" value="ECO:0007669"/>
    <property type="project" value="UniProtKB-KW"/>
</dbReference>
<dbReference type="FunFam" id="1.10.220.10:FF:000001">
    <property type="entry name" value="Annexin"/>
    <property type="match status" value="1"/>
</dbReference>
<dbReference type="FunFam" id="1.10.220.10:FF:000002">
    <property type="entry name" value="Annexin"/>
    <property type="match status" value="1"/>
</dbReference>
<dbReference type="FunFam" id="1.10.220.10:FF:000003">
    <property type="entry name" value="Annexin"/>
    <property type="match status" value="1"/>
</dbReference>
<dbReference type="FunFam" id="1.10.220.10:FF:000004">
    <property type="entry name" value="Annexin"/>
    <property type="match status" value="1"/>
</dbReference>
<dbReference type="Gene3D" id="1.10.220.10">
    <property type="entry name" value="Annexin"/>
    <property type="match status" value="4"/>
</dbReference>
<dbReference type="InterPro" id="IPR001464">
    <property type="entry name" value="Annexin"/>
</dbReference>
<dbReference type="InterPro" id="IPR018502">
    <property type="entry name" value="Annexin_repeat"/>
</dbReference>
<dbReference type="InterPro" id="IPR018252">
    <property type="entry name" value="Annexin_repeat_CS"/>
</dbReference>
<dbReference type="InterPro" id="IPR037104">
    <property type="entry name" value="Annexin_sf"/>
</dbReference>
<dbReference type="InterPro" id="IPR002390">
    <property type="entry name" value="ANX3"/>
</dbReference>
<dbReference type="PANTHER" id="PTHR10502">
    <property type="entry name" value="ANNEXIN"/>
    <property type="match status" value="1"/>
</dbReference>
<dbReference type="PANTHER" id="PTHR10502:SF25">
    <property type="entry name" value="ANNEXIN A3"/>
    <property type="match status" value="1"/>
</dbReference>
<dbReference type="Pfam" id="PF00191">
    <property type="entry name" value="Annexin"/>
    <property type="match status" value="4"/>
</dbReference>
<dbReference type="PRINTS" id="PR00196">
    <property type="entry name" value="ANNEXIN"/>
</dbReference>
<dbReference type="PRINTS" id="PR00199">
    <property type="entry name" value="ANNEXINIII"/>
</dbReference>
<dbReference type="SMART" id="SM00335">
    <property type="entry name" value="ANX"/>
    <property type="match status" value="4"/>
</dbReference>
<dbReference type="SUPFAM" id="SSF47874">
    <property type="entry name" value="Annexin"/>
    <property type="match status" value="1"/>
</dbReference>
<dbReference type="PROSITE" id="PS00223">
    <property type="entry name" value="ANNEXIN_1"/>
    <property type="match status" value="4"/>
</dbReference>
<dbReference type="PROSITE" id="PS51897">
    <property type="entry name" value="ANNEXIN_2"/>
    <property type="match status" value="4"/>
</dbReference>
<gene>
    <name type="primary">ANXA3</name>
</gene>
<protein>
    <recommendedName>
        <fullName>Annexin A3</fullName>
    </recommendedName>
    <alternativeName>
        <fullName>Annexin III</fullName>
    </alternativeName>
    <alternativeName>
        <fullName>Annexin-3</fullName>
    </alternativeName>
</protein>
<feature type="initiator methionine" description="Removed" evidence="3">
    <location>
        <position position="1"/>
    </location>
</feature>
<feature type="chain" id="PRO_0000236217" description="Annexin A3">
    <location>
        <begin position="2"/>
        <end position="323"/>
    </location>
</feature>
<feature type="repeat" description="Annexin 1" evidence="5">
    <location>
        <begin position="18"/>
        <end position="89"/>
    </location>
</feature>
<feature type="repeat" description="Annexin 2" evidence="5">
    <location>
        <begin position="90"/>
        <end position="161"/>
    </location>
</feature>
<feature type="repeat" description="Annexin 3" evidence="5">
    <location>
        <begin position="173"/>
        <end position="245"/>
    </location>
</feature>
<feature type="repeat" description="Annexin 4" evidence="5">
    <location>
        <begin position="249"/>
        <end position="320"/>
    </location>
</feature>
<feature type="modified residue" description="N-acetylalanine" evidence="3">
    <location>
        <position position="2"/>
    </location>
</feature>
<feature type="modified residue" description="N6-acetyllysine" evidence="2">
    <location>
        <position position="177"/>
    </location>
</feature>
<feature type="modified residue" description="Phosphothreonine" evidence="4">
    <location>
        <position position="267"/>
    </location>
</feature>
<sequence length="323" mass="36140">MASIWVGKRGTIRDYAGFNPSVDAEAIRKAIRGIGTDEKTLISILTERTNAQRLLIAKEYQALCGKELKDDLKGDLSGHFKHLMVALVTPPAVFDAKQLKKSMKGMGTNEDALIEILTTRTSKQMQEIGHAYYTAYKKSLGDEISSETSGDFRKALLILANGRRDESLKVDEQLARKDAQILYNAGEKRWGTDEDAFTNILCLRSFPQLKLTFDEYRNISQKDIEDSIKGELSGHFEDLLLAIVRCARNTPAFLAERLYRALKGAGTDEFTLNRIMVSRSEIDLLDIRAEFKKLSGYSLYSAIKSDTSGDYEITLLKICGGDD</sequence>
<proteinExistence type="evidence at transcript level"/>
<accession>Q3SWX7</accession>